<feature type="signal peptide">
    <location>
        <begin position="1" status="less than"/>
        <end position="7"/>
    </location>
</feature>
<feature type="chain" id="PRO_0000403812" description="Neurotoxin LmNaTx21.1">
    <location>
        <begin position="8"/>
        <end position="77"/>
    </location>
</feature>
<feature type="domain" description="LCN-type CS-alpha/beta" evidence="2">
    <location>
        <begin position="16"/>
        <end position="76"/>
    </location>
</feature>
<feature type="disulfide bond" evidence="2">
    <location>
        <begin position="26"/>
        <end position="75"/>
    </location>
</feature>
<feature type="disulfide bond" evidence="2">
    <location>
        <begin position="30"/>
        <end position="51"/>
    </location>
</feature>
<feature type="disulfide bond" evidence="2">
    <location>
        <begin position="37"/>
        <end position="58"/>
    </location>
</feature>
<feature type="disulfide bond" evidence="2">
    <location>
        <begin position="41"/>
        <end position="60"/>
    </location>
</feature>
<feature type="non-terminal residue">
    <location>
        <position position="1"/>
    </location>
</feature>
<name>SNAAL_LYCMC</name>
<comment type="function">
    <text evidence="1">Binds voltage-independently at site-3 of voltage-gated sodium channels (Nav) and inhibits the inactivation of the activated channels, thereby blocking neuronal transmission.</text>
</comment>
<comment type="subcellular location">
    <subcellularLocation>
        <location evidence="1">Secreted</location>
    </subcellularLocation>
</comment>
<comment type="tissue specificity">
    <text>Expressed by the venom gland.</text>
</comment>
<comment type="domain">
    <text evidence="3">Has the structural arrangement of an alpha-helix connected to antiparallel beta-sheets by disulfide bonds (CS-alpha/beta).</text>
</comment>
<comment type="similarity">
    <text evidence="3">Belongs to the long (4 C-C) scorpion toxin superfamily. Sodium channel inhibitor family. Alpha subfamily.</text>
</comment>
<organism>
    <name type="scientific">Lychas mucronatus</name>
    <name type="common">Chinese swimming scorpion</name>
    <dbReference type="NCBI Taxonomy" id="172552"/>
    <lineage>
        <taxon>Eukaryota</taxon>
        <taxon>Metazoa</taxon>
        <taxon>Ecdysozoa</taxon>
        <taxon>Arthropoda</taxon>
        <taxon>Chelicerata</taxon>
        <taxon>Arachnida</taxon>
        <taxon>Scorpiones</taxon>
        <taxon>Buthida</taxon>
        <taxon>Buthoidea</taxon>
        <taxon>Buthidae</taxon>
        <taxon>Lychas</taxon>
    </lineage>
</organism>
<sequence length="77" mass="8808">LILVACLMMSCVHCKKDGYPVDWNNCMYDCGYDNAYCEKICKEKGGESGYCYFWKISCYCEGLPDNVEIKGYGRCRG</sequence>
<protein>
    <recommendedName>
        <fullName>Neurotoxin LmNaTx21.1</fullName>
    </recommendedName>
</protein>
<keyword id="KW-1015">Disulfide bond</keyword>
<keyword id="KW-0872">Ion channel impairing toxin</keyword>
<keyword id="KW-0528">Neurotoxin</keyword>
<keyword id="KW-0964">Secreted</keyword>
<keyword id="KW-0732">Signal</keyword>
<keyword id="KW-0800">Toxin</keyword>
<keyword id="KW-0738">Voltage-gated sodium channel impairing toxin</keyword>
<accession>P0CI53</accession>
<dbReference type="EMBL" id="GT028758">
    <property type="status" value="NOT_ANNOTATED_CDS"/>
    <property type="molecule type" value="mRNA"/>
</dbReference>
<dbReference type="SMR" id="P0CI53"/>
<dbReference type="GO" id="GO:0005576">
    <property type="term" value="C:extracellular region"/>
    <property type="evidence" value="ECO:0007669"/>
    <property type="project" value="UniProtKB-SubCell"/>
</dbReference>
<dbReference type="GO" id="GO:0019871">
    <property type="term" value="F:sodium channel inhibitor activity"/>
    <property type="evidence" value="ECO:0007669"/>
    <property type="project" value="InterPro"/>
</dbReference>
<dbReference type="GO" id="GO:0090729">
    <property type="term" value="F:toxin activity"/>
    <property type="evidence" value="ECO:0007669"/>
    <property type="project" value="UniProtKB-KW"/>
</dbReference>
<dbReference type="GO" id="GO:0006952">
    <property type="term" value="P:defense response"/>
    <property type="evidence" value="ECO:0007669"/>
    <property type="project" value="InterPro"/>
</dbReference>
<dbReference type="CDD" id="cd23106">
    <property type="entry name" value="neurotoxins_LC_scorpion"/>
    <property type="match status" value="1"/>
</dbReference>
<dbReference type="Gene3D" id="3.30.30.10">
    <property type="entry name" value="Knottin, scorpion toxin-like"/>
    <property type="match status" value="1"/>
</dbReference>
<dbReference type="InterPro" id="IPR044062">
    <property type="entry name" value="LCN-type_CS_alpha_beta_dom"/>
</dbReference>
<dbReference type="InterPro" id="IPR003614">
    <property type="entry name" value="Scorpion_toxin-like"/>
</dbReference>
<dbReference type="InterPro" id="IPR036574">
    <property type="entry name" value="Scorpion_toxin-like_sf"/>
</dbReference>
<dbReference type="InterPro" id="IPR018218">
    <property type="entry name" value="Scorpion_toxinL"/>
</dbReference>
<dbReference type="InterPro" id="IPR002061">
    <property type="entry name" value="Scorpion_toxinL/defensin"/>
</dbReference>
<dbReference type="Pfam" id="PF00537">
    <property type="entry name" value="Toxin_3"/>
    <property type="match status" value="1"/>
</dbReference>
<dbReference type="PRINTS" id="PR00285">
    <property type="entry name" value="SCORPNTOXIN"/>
</dbReference>
<dbReference type="SMART" id="SM00505">
    <property type="entry name" value="Knot1"/>
    <property type="match status" value="1"/>
</dbReference>
<dbReference type="SUPFAM" id="SSF57095">
    <property type="entry name" value="Scorpion toxin-like"/>
    <property type="match status" value="1"/>
</dbReference>
<dbReference type="PROSITE" id="PS51863">
    <property type="entry name" value="LCN_CSAB"/>
    <property type="match status" value="1"/>
</dbReference>
<evidence type="ECO:0000250" key="1"/>
<evidence type="ECO:0000255" key="2">
    <source>
        <dbReference type="PROSITE-ProRule" id="PRU01210"/>
    </source>
</evidence>
<evidence type="ECO:0000305" key="3"/>
<proteinExistence type="evidence at transcript level"/>
<reference key="1">
    <citation type="journal article" date="2010" name="BMC Genomics">
        <title>Comparative venom gland transcriptome analysis of the scorpion Lychas mucronatus reveals intraspecific toxic gene diversity and new venomous components.</title>
        <authorList>
            <person name="Zhao R."/>
            <person name="Ma Y."/>
            <person name="He Y."/>
            <person name="Di Z."/>
            <person name="Wu Y.-L."/>
            <person name="Cao Z.-J."/>
            <person name="Li W.-X."/>
        </authorList>
    </citation>
    <scope>NUCLEOTIDE SEQUENCE [MRNA]</scope>
    <source>
        <strain>Yunnan</strain>
        <tissue>Venom gland</tissue>
    </source>
</reference>